<dbReference type="EC" id="4.1.99.17" evidence="1"/>
<dbReference type="EMBL" id="CP000769">
    <property type="protein sequence ID" value="ABS26369.1"/>
    <property type="molecule type" value="Genomic_DNA"/>
</dbReference>
<dbReference type="RefSeq" id="WP_012096950.1">
    <property type="nucleotide sequence ID" value="NC_009675.1"/>
</dbReference>
<dbReference type="SMR" id="A7HCC3"/>
<dbReference type="STRING" id="404589.Anae109_2167"/>
<dbReference type="KEGG" id="afw:Anae109_2167"/>
<dbReference type="eggNOG" id="COG0422">
    <property type="taxonomic scope" value="Bacteria"/>
</dbReference>
<dbReference type="HOGENOM" id="CLU_013181_2_2_7"/>
<dbReference type="OrthoDB" id="9805897at2"/>
<dbReference type="UniPathway" id="UPA00060"/>
<dbReference type="Proteomes" id="UP000006382">
    <property type="component" value="Chromosome"/>
</dbReference>
<dbReference type="GO" id="GO:0005829">
    <property type="term" value="C:cytosol"/>
    <property type="evidence" value="ECO:0007669"/>
    <property type="project" value="TreeGrafter"/>
</dbReference>
<dbReference type="GO" id="GO:0051539">
    <property type="term" value="F:4 iron, 4 sulfur cluster binding"/>
    <property type="evidence" value="ECO:0007669"/>
    <property type="project" value="UniProtKB-KW"/>
</dbReference>
<dbReference type="GO" id="GO:0016830">
    <property type="term" value="F:carbon-carbon lyase activity"/>
    <property type="evidence" value="ECO:0007669"/>
    <property type="project" value="InterPro"/>
</dbReference>
<dbReference type="GO" id="GO:0008270">
    <property type="term" value="F:zinc ion binding"/>
    <property type="evidence" value="ECO:0007669"/>
    <property type="project" value="UniProtKB-UniRule"/>
</dbReference>
<dbReference type="GO" id="GO:0009228">
    <property type="term" value="P:thiamine biosynthetic process"/>
    <property type="evidence" value="ECO:0007669"/>
    <property type="project" value="UniProtKB-KW"/>
</dbReference>
<dbReference type="GO" id="GO:0009229">
    <property type="term" value="P:thiamine diphosphate biosynthetic process"/>
    <property type="evidence" value="ECO:0007669"/>
    <property type="project" value="UniProtKB-UniRule"/>
</dbReference>
<dbReference type="FunFam" id="3.20.20.540:FF:000001">
    <property type="entry name" value="Phosphomethylpyrimidine synthase"/>
    <property type="match status" value="1"/>
</dbReference>
<dbReference type="Gene3D" id="6.10.250.620">
    <property type="match status" value="1"/>
</dbReference>
<dbReference type="Gene3D" id="3.20.20.540">
    <property type="entry name" value="Radical SAM ThiC family, central domain"/>
    <property type="match status" value="1"/>
</dbReference>
<dbReference type="HAMAP" id="MF_00089">
    <property type="entry name" value="ThiC"/>
    <property type="match status" value="1"/>
</dbReference>
<dbReference type="InterPro" id="IPR037509">
    <property type="entry name" value="ThiC"/>
</dbReference>
<dbReference type="InterPro" id="IPR038521">
    <property type="entry name" value="ThiC/Bza_core_dom"/>
</dbReference>
<dbReference type="InterPro" id="IPR002817">
    <property type="entry name" value="ThiC/BzaA/B"/>
</dbReference>
<dbReference type="NCBIfam" id="NF006763">
    <property type="entry name" value="PRK09284.1"/>
    <property type="match status" value="1"/>
</dbReference>
<dbReference type="NCBIfam" id="NF009895">
    <property type="entry name" value="PRK13352.1"/>
    <property type="match status" value="1"/>
</dbReference>
<dbReference type="NCBIfam" id="TIGR00190">
    <property type="entry name" value="thiC"/>
    <property type="match status" value="1"/>
</dbReference>
<dbReference type="PANTHER" id="PTHR30557:SF1">
    <property type="entry name" value="PHOSPHOMETHYLPYRIMIDINE SYNTHASE, CHLOROPLASTIC"/>
    <property type="match status" value="1"/>
</dbReference>
<dbReference type="PANTHER" id="PTHR30557">
    <property type="entry name" value="THIAMINE BIOSYNTHESIS PROTEIN THIC"/>
    <property type="match status" value="1"/>
</dbReference>
<dbReference type="Pfam" id="PF01964">
    <property type="entry name" value="ThiC_Rad_SAM"/>
    <property type="match status" value="1"/>
</dbReference>
<dbReference type="SFLD" id="SFLDF00407">
    <property type="entry name" value="phosphomethylpyrimidine_syntha"/>
    <property type="match status" value="1"/>
</dbReference>
<dbReference type="SFLD" id="SFLDG01114">
    <property type="entry name" value="phosphomethylpyrimidine_syntha"/>
    <property type="match status" value="1"/>
</dbReference>
<dbReference type="SFLD" id="SFLDS00113">
    <property type="entry name" value="Radical_SAM_Phosphomethylpyrim"/>
    <property type="match status" value="1"/>
</dbReference>
<comment type="function">
    <text evidence="1">Catalyzes the synthesis of the hydroxymethylpyrimidine phosphate (HMP-P) moiety of thiamine from aminoimidazole ribotide (AIR) in a radical S-adenosyl-L-methionine (SAM)-dependent reaction.</text>
</comment>
<comment type="catalytic activity">
    <reaction evidence="1">
        <text>5-amino-1-(5-phospho-beta-D-ribosyl)imidazole + S-adenosyl-L-methionine = 4-amino-2-methyl-5-(phosphooxymethyl)pyrimidine + CO + 5'-deoxyadenosine + formate + L-methionine + 3 H(+)</text>
        <dbReference type="Rhea" id="RHEA:24840"/>
        <dbReference type="ChEBI" id="CHEBI:15378"/>
        <dbReference type="ChEBI" id="CHEBI:15740"/>
        <dbReference type="ChEBI" id="CHEBI:17245"/>
        <dbReference type="ChEBI" id="CHEBI:17319"/>
        <dbReference type="ChEBI" id="CHEBI:57844"/>
        <dbReference type="ChEBI" id="CHEBI:58354"/>
        <dbReference type="ChEBI" id="CHEBI:59789"/>
        <dbReference type="ChEBI" id="CHEBI:137981"/>
        <dbReference type="EC" id="4.1.99.17"/>
    </reaction>
</comment>
<comment type="cofactor">
    <cofactor evidence="1">
        <name>[4Fe-4S] cluster</name>
        <dbReference type="ChEBI" id="CHEBI:49883"/>
    </cofactor>
    <text evidence="1">Binds 1 [4Fe-4S] cluster per subunit. The cluster is coordinated with 3 cysteines and an exchangeable S-adenosyl-L-methionine.</text>
</comment>
<comment type="pathway">
    <text evidence="1">Cofactor biosynthesis; thiamine diphosphate biosynthesis.</text>
</comment>
<comment type="subunit">
    <text evidence="1">Homodimer.</text>
</comment>
<comment type="similarity">
    <text evidence="1">Belongs to the ThiC family.</text>
</comment>
<accession>A7HCC3</accession>
<reference key="1">
    <citation type="journal article" date="2015" name="Genome Announc.">
        <title>Complete genome sequence of Anaeromyxobacter sp. Fw109-5, an anaerobic, metal-reducing bacterium isolated from a contaminated subsurface environment.</title>
        <authorList>
            <person name="Hwang C."/>
            <person name="Copeland A."/>
            <person name="Lucas S."/>
            <person name="Lapidus A."/>
            <person name="Barry K."/>
            <person name="Glavina Del Rio T."/>
            <person name="Dalin E."/>
            <person name="Tice H."/>
            <person name="Pitluck S."/>
            <person name="Sims D."/>
            <person name="Brettin T."/>
            <person name="Bruce D.C."/>
            <person name="Detter J.C."/>
            <person name="Han C.S."/>
            <person name="Schmutz J."/>
            <person name="Larimer F.W."/>
            <person name="Land M.L."/>
            <person name="Hauser L.J."/>
            <person name="Kyrpides N."/>
            <person name="Lykidis A."/>
            <person name="Richardson P."/>
            <person name="Belieav A."/>
            <person name="Sanford R.A."/>
            <person name="Loeffler F.E."/>
            <person name="Fields M.W."/>
        </authorList>
    </citation>
    <scope>NUCLEOTIDE SEQUENCE [LARGE SCALE GENOMIC DNA]</scope>
    <source>
        <strain>Fw109-5</strain>
    </source>
</reference>
<feature type="chain" id="PRO_1000004730" description="Phosphomethylpyrimidine synthase">
    <location>
        <begin position="1"/>
        <end position="468"/>
    </location>
</feature>
<feature type="binding site" evidence="1">
    <location>
        <position position="80"/>
    </location>
    <ligand>
        <name>substrate</name>
    </ligand>
</feature>
<feature type="binding site" evidence="1">
    <location>
        <position position="109"/>
    </location>
    <ligand>
        <name>substrate</name>
    </ligand>
</feature>
<feature type="binding site" evidence="1">
    <location>
        <position position="138"/>
    </location>
    <ligand>
        <name>substrate</name>
    </ligand>
</feature>
<feature type="binding site" evidence="1">
    <location>
        <position position="173"/>
    </location>
    <ligand>
        <name>substrate</name>
    </ligand>
</feature>
<feature type="binding site" evidence="1">
    <location>
        <begin position="193"/>
        <end position="195"/>
    </location>
    <ligand>
        <name>substrate</name>
    </ligand>
</feature>
<feature type="binding site" evidence="1">
    <location>
        <begin position="234"/>
        <end position="237"/>
    </location>
    <ligand>
        <name>substrate</name>
    </ligand>
</feature>
<feature type="binding site" evidence="1">
    <location>
        <position position="273"/>
    </location>
    <ligand>
        <name>substrate</name>
    </ligand>
</feature>
<feature type="binding site" evidence="1">
    <location>
        <position position="277"/>
    </location>
    <ligand>
        <name>Zn(2+)</name>
        <dbReference type="ChEBI" id="CHEBI:29105"/>
    </ligand>
</feature>
<feature type="binding site" evidence="1">
    <location>
        <position position="300"/>
    </location>
    <ligand>
        <name>substrate</name>
    </ligand>
</feature>
<feature type="binding site" evidence="1">
    <location>
        <position position="341"/>
    </location>
    <ligand>
        <name>Zn(2+)</name>
        <dbReference type="ChEBI" id="CHEBI:29105"/>
    </ligand>
</feature>
<feature type="binding site" evidence="1">
    <location>
        <position position="421"/>
    </location>
    <ligand>
        <name>[4Fe-4S] cluster</name>
        <dbReference type="ChEBI" id="CHEBI:49883"/>
        <note>4Fe-4S-S-AdoMet</note>
    </ligand>
</feature>
<feature type="binding site" evidence="1">
    <location>
        <position position="424"/>
    </location>
    <ligand>
        <name>[4Fe-4S] cluster</name>
        <dbReference type="ChEBI" id="CHEBI:49883"/>
        <note>4Fe-4S-S-AdoMet</note>
    </ligand>
</feature>
<feature type="binding site" evidence="1">
    <location>
        <position position="429"/>
    </location>
    <ligand>
        <name>[4Fe-4S] cluster</name>
        <dbReference type="ChEBI" id="CHEBI:49883"/>
        <note>4Fe-4S-S-AdoMet</note>
    </ligand>
</feature>
<sequence length="468" mass="50626">MRAQWIARRHGQPNVTQMHHARRGSVTEEMAHVAAREKLDPELVRQEVARGRMVIPANLKHPELEPIAIGIAATCKINANIGNSAVTSDVDEELRKLSVCLRHGADTVMDLSTGGDIPLIRENILRHSPIPVGTVPIYECLAHVKDVVDLTPRGLLEIIEAQAAQGVDYMTIHAGVLRDIVPMAAGRITGIVSRGGALLARWMAANGQENPLYTHFDEICEIFKRYDVTFSLGDGLRPGCLADASDEAQFAELKVLGELTRKAWAHDVQVMVEGPGHVPLDQIPMNMQKERELCDEAPFYVLGPLVTDIAPGYDHITSAIGAAVAAQHGASMLCYVTPAEHLGLPDAEDVRQGIVAYKIAAHAADVARQRPGARDRDDALSRARYAFDWKRQFELSLDPDAARTKHDATLPQEAAKSAEFCSMCGPKFCSMRIHSHLGDGAAPGAALPCADAAPSQPTRAGGPLPIAR</sequence>
<name>THIC_ANADF</name>
<gene>
    <name evidence="1" type="primary">thiC</name>
    <name type="ordered locus">Anae109_2167</name>
</gene>
<evidence type="ECO:0000255" key="1">
    <source>
        <dbReference type="HAMAP-Rule" id="MF_00089"/>
    </source>
</evidence>
<keyword id="KW-0004">4Fe-4S</keyword>
<keyword id="KW-0408">Iron</keyword>
<keyword id="KW-0411">Iron-sulfur</keyword>
<keyword id="KW-0456">Lyase</keyword>
<keyword id="KW-0479">Metal-binding</keyword>
<keyword id="KW-1185">Reference proteome</keyword>
<keyword id="KW-0949">S-adenosyl-L-methionine</keyword>
<keyword id="KW-0784">Thiamine biosynthesis</keyword>
<keyword id="KW-0862">Zinc</keyword>
<protein>
    <recommendedName>
        <fullName evidence="1">Phosphomethylpyrimidine synthase</fullName>
        <ecNumber evidence="1">4.1.99.17</ecNumber>
    </recommendedName>
    <alternativeName>
        <fullName evidence="1">Hydroxymethylpyrimidine phosphate synthase</fullName>
        <shortName evidence="1">HMP-P synthase</shortName>
        <shortName evidence="1">HMP-phosphate synthase</shortName>
        <shortName evidence="1">HMPP synthase</shortName>
    </alternativeName>
    <alternativeName>
        <fullName evidence="1">Thiamine biosynthesis protein ThiC</fullName>
    </alternativeName>
</protein>
<organism>
    <name type="scientific">Anaeromyxobacter sp. (strain Fw109-5)</name>
    <dbReference type="NCBI Taxonomy" id="404589"/>
    <lineage>
        <taxon>Bacteria</taxon>
        <taxon>Pseudomonadati</taxon>
        <taxon>Myxococcota</taxon>
        <taxon>Myxococcia</taxon>
        <taxon>Myxococcales</taxon>
        <taxon>Cystobacterineae</taxon>
        <taxon>Anaeromyxobacteraceae</taxon>
        <taxon>Anaeromyxobacter</taxon>
    </lineage>
</organism>
<proteinExistence type="inferred from homology"/>